<protein>
    <recommendedName>
        <fullName evidence="1">Ribosome-binding factor A</fullName>
    </recommendedName>
</protein>
<keyword id="KW-0963">Cytoplasm</keyword>
<keyword id="KW-0690">Ribosome biogenesis</keyword>
<comment type="function">
    <text evidence="1">One of several proteins that assist in the late maturation steps of the functional core of the 30S ribosomal subunit. Associates with free 30S ribosomal subunits (but not with 30S subunits that are part of 70S ribosomes or polysomes). Required for efficient processing of 16S rRNA. May interact with the 5'-terminal helix region of 16S rRNA.</text>
</comment>
<comment type="subunit">
    <text evidence="1">Monomer. Binds 30S ribosomal subunits, but not 50S ribosomal subunits or 70S ribosomes.</text>
</comment>
<comment type="subcellular location">
    <subcellularLocation>
        <location evidence="1">Cytoplasm</location>
    </subcellularLocation>
</comment>
<comment type="similarity">
    <text evidence="1">Belongs to the RbfA family.</text>
</comment>
<evidence type="ECO:0000255" key="1">
    <source>
        <dbReference type="HAMAP-Rule" id="MF_00003"/>
    </source>
</evidence>
<feature type="chain" id="PRO_1000193237" description="Ribosome-binding factor A">
    <location>
        <begin position="1"/>
        <end position="120"/>
    </location>
</feature>
<reference key="1">
    <citation type="journal article" date="2009" name="Science">
        <title>The dynamics and time scale of ongoing genomic erosion in symbiotic bacteria.</title>
        <authorList>
            <person name="Moran N.A."/>
            <person name="McLaughlin H.J."/>
            <person name="Sorek R."/>
        </authorList>
    </citation>
    <scope>NUCLEOTIDE SEQUENCE [LARGE SCALE GENOMIC DNA]</scope>
    <source>
        <strain>5A</strain>
    </source>
</reference>
<dbReference type="EMBL" id="CP001161">
    <property type="protein sequence ID" value="ACL30732.1"/>
    <property type="molecule type" value="Genomic_DNA"/>
</dbReference>
<dbReference type="RefSeq" id="WP_009874334.1">
    <property type="nucleotide sequence ID" value="NC_011833.1"/>
</dbReference>
<dbReference type="SMR" id="B8D9G1"/>
<dbReference type="KEGG" id="bap:BUAP5A_369"/>
<dbReference type="HOGENOM" id="CLU_089475_5_2_6"/>
<dbReference type="OrthoDB" id="307788at2"/>
<dbReference type="Proteomes" id="UP000006904">
    <property type="component" value="Chromosome"/>
</dbReference>
<dbReference type="GO" id="GO:0005829">
    <property type="term" value="C:cytosol"/>
    <property type="evidence" value="ECO:0007669"/>
    <property type="project" value="TreeGrafter"/>
</dbReference>
<dbReference type="GO" id="GO:0043024">
    <property type="term" value="F:ribosomal small subunit binding"/>
    <property type="evidence" value="ECO:0007669"/>
    <property type="project" value="TreeGrafter"/>
</dbReference>
<dbReference type="GO" id="GO:0030490">
    <property type="term" value="P:maturation of SSU-rRNA"/>
    <property type="evidence" value="ECO:0007669"/>
    <property type="project" value="UniProtKB-UniRule"/>
</dbReference>
<dbReference type="Gene3D" id="3.30.300.20">
    <property type="match status" value="1"/>
</dbReference>
<dbReference type="HAMAP" id="MF_00003">
    <property type="entry name" value="RbfA"/>
    <property type="match status" value="1"/>
</dbReference>
<dbReference type="InterPro" id="IPR015946">
    <property type="entry name" value="KH_dom-like_a/b"/>
</dbReference>
<dbReference type="InterPro" id="IPR000238">
    <property type="entry name" value="RbfA"/>
</dbReference>
<dbReference type="InterPro" id="IPR023799">
    <property type="entry name" value="RbfA_dom_sf"/>
</dbReference>
<dbReference type="InterPro" id="IPR020053">
    <property type="entry name" value="Ribosome-bd_factorA_CS"/>
</dbReference>
<dbReference type="NCBIfam" id="TIGR00082">
    <property type="entry name" value="rbfA"/>
    <property type="match status" value="1"/>
</dbReference>
<dbReference type="PANTHER" id="PTHR33515">
    <property type="entry name" value="RIBOSOME-BINDING FACTOR A, CHLOROPLASTIC-RELATED"/>
    <property type="match status" value="1"/>
</dbReference>
<dbReference type="PANTHER" id="PTHR33515:SF1">
    <property type="entry name" value="RIBOSOME-BINDING FACTOR A, CHLOROPLASTIC-RELATED"/>
    <property type="match status" value="1"/>
</dbReference>
<dbReference type="Pfam" id="PF02033">
    <property type="entry name" value="RBFA"/>
    <property type="match status" value="1"/>
</dbReference>
<dbReference type="SUPFAM" id="SSF89919">
    <property type="entry name" value="Ribosome-binding factor A, RbfA"/>
    <property type="match status" value="1"/>
</dbReference>
<dbReference type="PROSITE" id="PS01319">
    <property type="entry name" value="RBFA"/>
    <property type="match status" value="1"/>
</dbReference>
<sequence>MEKLFNRSDRIAQELQKKIAAIIQHSLKDPRIKTIITVSEVQVSKDLSYAQIFVSFLESDNNEKVKKKITILNRASSYIRKLLCKRMKLRIVPNIIFHHDDSFLKGNKISCILENLTKKE</sequence>
<accession>B8D9G1</accession>
<proteinExistence type="inferred from homology"/>
<organism>
    <name type="scientific">Buchnera aphidicola subsp. Acyrthosiphon pisum (strain 5A)</name>
    <dbReference type="NCBI Taxonomy" id="563178"/>
    <lineage>
        <taxon>Bacteria</taxon>
        <taxon>Pseudomonadati</taxon>
        <taxon>Pseudomonadota</taxon>
        <taxon>Gammaproteobacteria</taxon>
        <taxon>Enterobacterales</taxon>
        <taxon>Erwiniaceae</taxon>
        <taxon>Buchnera</taxon>
    </lineage>
</organism>
<name>RBFA_BUCA5</name>
<gene>
    <name evidence="1" type="primary">rbfA</name>
    <name type="ordered locus">BUAP5A_369</name>
</gene>